<gene>
    <name evidence="1" type="primary">mdh</name>
    <name type="ordered locus">ROP_63030</name>
</gene>
<comment type="function">
    <text evidence="1">Catalyzes the reversible oxidation of malate to oxaloacetate.</text>
</comment>
<comment type="catalytic activity">
    <reaction evidence="1">
        <text>(S)-malate + NAD(+) = oxaloacetate + NADH + H(+)</text>
        <dbReference type="Rhea" id="RHEA:21432"/>
        <dbReference type="ChEBI" id="CHEBI:15378"/>
        <dbReference type="ChEBI" id="CHEBI:15589"/>
        <dbReference type="ChEBI" id="CHEBI:16452"/>
        <dbReference type="ChEBI" id="CHEBI:57540"/>
        <dbReference type="ChEBI" id="CHEBI:57945"/>
        <dbReference type="EC" id="1.1.1.37"/>
    </reaction>
</comment>
<comment type="similarity">
    <text evidence="1">Belongs to the LDH/MDH superfamily. MDH type 2 family.</text>
</comment>
<feature type="chain" id="PRO_1000185085" description="Malate dehydrogenase">
    <location>
        <begin position="1"/>
        <end position="331"/>
    </location>
</feature>
<feature type="active site" description="Proton acceptor" evidence="1">
    <location>
        <position position="190"/>
    </location>
</feature>
<feature type="binding site" evidence="1">
    <location>
        <begin position="14"/>
        <end position="20"/>
    </location>
    <ligand>
        <name>NAD(+)</name>
        <dbReference type="ChEBI" id="CHEBI:57540"/>
    </ligand>
</feature>
<feature type="binding site" evidence="1">
    <location>
        <position position="95"/>
    </location>
    <ligand>
        <name>substrate</name>
    </ligand>
</feature>
<feature type="binding site" evidence="1">
    <location>
        <position position="101"/>
    </location>
    <ligand>
        <name>substrate</name>
    </ligand>
</feature>
<feature type="binding site" evidence="1">
    <location>
        <position position="108"/>
    </location>
    <ligand>
        <name>NAD(+)</name>
        <dbReference type="ChEBI" id="CHEBI:57540"/>
    </ligand>
</feature>
<feature type="binding site" evidence="1">
    <location>
        <position position="115"/>
    </location>
    <ligand>
        <name>NAD(+)</name>
        <dbReference type="ChEBI" id="CHEBI:57540"/>
    </ligand>
</feature>
<feature type="binding site" evidence="1">
    <location>
        <begin position="132"/>
        <end position="134"/>
    </location>
    <ligand>
        <name>NAD(+)</name>
        <dbReference type="ChEBI" id="CHEBI:57540"/>
    </ligand>
</feature>
<feature type="binding site" evidence="1">
    <location>
        <position position="134"/>
    </location>
    <ligand>
        <name>substrate</name>
    </ligand>
</feature>
<feature type="binding site" evidence="1">
    <location>
        <position position="165"/>
    </location>
    <ligand>
        <name>substrate</name>
    </ligand>
</feature>
<reference key="1">
    <citation type="submission" date="2009-03" db="EMBL/GenBank/DDBJ databases">
        <title>Comparison of the complete genome sequences of Rhodococcus erythropolis PR4 and Rhodococcus opacus B4.</title>
        <authorList>
            <person name="Takarada H."/>
            <person name="Sekine M."/>
            <person name="Hosoyama A."/>
            <person name="Yamada R."/>
            <person name="Fujisawa T."/>
            <person name="Omata S."/>
            <person name="Shimizu A."/>
            <person name="Tsukatani N."/>
            <person name="Tanikawa S."/>
            <person name="Fujita N."/>
            <person name="Harayama S."/>
        </authorList>
    </citation>
    <scope>NUCLEOTIDE SEQUENCE [LARGE SCALE GENOMIC DNA]</scope>
    <source>
        <strain>B4</strain>
    </source>
</reference>
<organism>
    <name type="scientific">Rhodococcus opacus (strain B4)</name>
    <dbReference type="NCBI Taxonomy" id="632772"/>
    <lineage>
        <taxon>Bacteria</taxon>
        <taxon>Bacillati</taxon>
        <taxon>Actinomycetota</taxon>
        <taxon>Actinomycetes</taxon>
        <taxon>Mycobacteriales</taxon>
        <taxon>Nocardiaceae</taxon>
        <taxon>Rhodococcus</taxon>
    </lineage>
</organism>
<keyword id="KW-0520">NAD</keyword>
<keyword id="KW-0560">Oxidoreductase</keyword>
<keyword id="KW-0816">Tricarboxylic acid cycle</keyword>
<dbReference type="EC" id="1.1.1.37" evidence="1"/>
<dbReference type="EMBL" id="AP011115">
    <property type="protein sequence ID" value="BAH54550.1"/>
    <property type="molecule type" value="Genomic_DNA"/>
</dbReference>
<dbReference type="RefSeq" id="WP_015890008.1">
    <property type="nucleotide sequence ID" value="NC_012522.1"/>
</dbReference>
<dbReference type="SMR" id="C1B155"/>
<dbReference type="STRING" id="632772.ROP_63030"/>
<dbReference type="KEGG" id="rop:ROP_63030"/>
<dbReference type="PATRIC" id="fig|632772.20.peg.6581"/>
<dbReference type="HOGENOM" id="CLU_040727_2_0_11"/>
<dbReference type="OrthoDB" id="9802969at2"/>
<dbReference type="Proteomes" id="UP000002212">
    <property type="component" value="Chromosome"/>
</dbReference>
<dbReference type="GO" id="GO:0030060">
    <property type="term" value="F:L-malate dehydrogenase (NAD+) activity"/>
    <property type="evidence" value="ECO:0007669"/>
    <property type="project" value="UniProtKB-UniRule"/>
</dbReference>
<dbReference type="GO" id="GO:0006108">
    <property type="term" value="P:malate metabolic process"/>
    <property type="evidence" value="ECO:0007669"/>
    <property type="project" value="InterPro"/>
</dbReference>
<dbReference type="GO" id="GO:0006099">
    <property type="term" value="P:tricarboxylic acid cycle"/>
    <property type="evidence" value="ECO:0007669"/>
    <property type="project" value="UniProtKB-UniRule"/>
</dbReference>
<dbReference type="CDD" id="cd01338">
    <property type="entry name" value="MDH_chloroplast-like"/>
    <property type="match status" value="1"/>
</dbReference>
<dbReference type="FunFam" id="3.40.50.720:FF:000010">
    <property type="entry name" value="Malate dehydrogenase"/>
    <property type="match status" value="1"/>
</dbReference>
<dbReference type="FunFam" id="3.90.110.10:FF:000002">
    <property type="entry name" value="Malate dehydrogenase"/>
    <property type="match status" value="1"/>
</dbReference>
<dbReference type="Gene3D" id="3.90.110.10">
    <property type="entry name" value="Lactate dehydrogenase/glycoside hydrolase, family 4, C-terminal"/>
    <property type="match status" value="1"/>
</dbReference>
<dbReference type="Gene3D" id="3.40.50.720">
    <property type="entry name" value="NAD(P)-binding Rossmann-like Domain"/>
    <property type="match status" value="1"/>
</dbReference>
<dbReference type="HAMAP" id="MF_01517">
    <property type="entry name" value="Malate_dehydrog_2"/>
    <property type="match status" value="1"/>
</dbReference>
<dbReference type="InterPro" id="IPR001557">
    <property type="entry name" value="L-lactate/malate_DH"/>
</dbReference>
<dbReference type="InterPro" id="IPR022383">
    <property type="entry name" value="Lactate/malate_DH_C"/>
</dbReference>
<dbReference type="InterPro" id="IPR001236">
    <property type="entry name" value="Lactate/malate_DH_N"/>
</dbReference>
<dbReference type="InterPro" id="IPR015955">
    <property type="entry name" value="Lactate_DH/Glyco_Ohase_4_C"/>
</dbReference>
<dbReference type="InterPro" id="IPR001252">
    <property type="entry name" value="Malate_DH_AS"/>
</dbReference>
<dbReference type="InterPro" id="IPR010945">
    <property type="entry name" value="Malate_DH_type2"/>
</dbReference>
<dbReference type="InterPro" id="IPR036291">
    <property type="entry name" value="NAD(P)-bd_dom_sf"/>
</dbReference>
<dbReference type="NCBIfam" id="TIGR01759">
    <property type="entry name" value="MalateDH-SF1"/>
    <property type="match status" value="1"/>
</dbReference>
<dbReference type="NCBIfam" id="NF003916">
    <property type="entry name" value="PRK05442.1"/>
    <property type="match status" value="1"/>
</dbReference>
<dbReference type="PANTHER" id="PTHR23382">
    <property type="entry name" value="MALATE DEHYDROGENASE"/>
    <property type="match status" value="1"/>
</dbReference>
<dbReference type="Pfam" id="PF02866">
    <property type="entry name" value="Ldh_1_C"/>
    <property type="match status" value="1"/>
</dbReference>
<dbReference type="Pfam" id="PF00056">
    <property type="entry name" value="Ldh_1_N"/>
    <property type="match status" value="1"/>
</dbReference>
<dbReference type="PIRSF" id="PIRSF000102">
    <property type="entry name" value="Lac_mal_DH"/>
    <property type="match status" value="1"/>
</dbReference>
<dbReference type="SUPFAM" id="SSF56327">
    <property type="entry name" value="LDH C-terminal domain-like"/>
    <property type="match status" value="1"/>
</dbReference>
<dbReference type="SUPFAM" id="SSF51735">
    <property type="entry name" value="NAD(P)-binding Rossmann-fold domains"/>
    <property type="match status" value="1"/>
</dbReference>
<dbReference type="PROSITE" id="PS00068">
    <property type="entry name" value="MDH"/>
    <property type="match status" value="1"/>
</dbReference>
<proteinExistence type="inferred from homology"/>
<accession>C1B155</accession>
<evidence type="ECO:0000255" key="1">
    <source>
        <dbReference type="HAMAP-Rule" id="MF_01517"/>
    </source>
</evidence>
<protein>
    <recommendedName>
        <fullName evidence="1">Malate dehydrogenase</fullName>
        <ecNumber evidence="1">1.1.1.37</ecNumber>
    </recommendedName>
</protein>
<sequence length="331" mass="34717">MTQSPTPAVVTVTGAAGSIGYAALFRIAAGAMLGPDTPIRLRLLEIPPAVSAAEGTAMELDDSAFPLLLDVEVHDDPKRGFDGTDVALLIGSRPRSKGMERGDLLAANGQIFTVQGRAINQVAADGVRVLVVGNPANTNALVAANNAPDVPAERFTALTRLDHNRAIAQLARHSGAAVRDISRVTIWGNHSSTQYPDIFHARVGDRSGADIAADREWLTGDFIPTVANRGSAIIEARGTSSAASAANAAIDHVHDWVLGTPEGDWTSVALPSTGAYGVPEGLVSSFPVRSVDGAWQVVEGLEIDDFSRKRIDASVADLESERDAVRGMGFI</sequence>
<name>MDH_RHOOB</name>